<protein>
    <recommendedName>
        <fullName>Growth factor</fullName>
    </recommendedName>
    <alternativeName>
        <fullName>Secreted epidermal growth factor-like</fullName>
    </alternativeName>
</protein>
<keyword id="KW-1015">Disulfide bond</keyword>
<keyword id="KW-0245">EGF-like domain</keyword>
<keyword id="KW-0325">Glycoprotein</keyword>
<keyword id="KW-0339">Growth factor</keyword>
<keyword id="KW-1185">Reference proteome</keyword>
<keyword id="KW-0964">Secreted</keyword>
<keyword id="KW-0732">Signal</keyword>
<sequence length="80" mass="9210">MATRNLVASLLCIMYAVHAMNDYLYIVKHVKVCNHDYENYCLNNGTCFTIALDNVSITPFCVCRINYEGSRCQFINLVTY</sequence>
<comment type="subcellular location">
    <subcellularLocation>
        <location evidence="1">Secreted</location>
    </subcellularLocation>
</comment>
<reference key="1">
    <citation type="journal article" date="1987" name="Mol. Cell. Biol.">
        <title>The genome of Shope fibroma virus, a tumorigenic poxvirus, contains a growth factor gene with sequence similarity to those encoding epidermal growth factor and transforming growth factor alpha.</title>
        <authorList>
            <person name="Chang W."/>
            <person name="Upton C."/>
            <person name="Hu S.-L."/>
            <person name="Purchio A.F."/>
            <person name="McFadden G."/>
        </authorList>
    </citation>
    <scope>NUCLEOTIDE SEQUENCE [GENOMIC DNA]</scope>
</reference>
<reference key="2">
    <citation type="journal article" date="1990" name="Virology">
        <title>Tumorigenic poxviruses: characterization of the expression of an epidermal growth factor related gene in Shope fibroma virus.</title>
        <authorList>
            <person name="Chang W."/>
            <person name="Macaulay C."/>
            <person name="Hu S.L."/>
            <person name="Tam J.P."/>
            <person name="McFadden G."/>
        </authorList>
    </citation>
    <scope>NUCLEOTIDE SEQUENCE [GENOMIC DNA]</scope>
</reference>
<reference key="3">
    <citation type="journal article" date="1991" name="Virology">
        <title>Sequence and analysis of a portion of the genomes of Shope fibroma virus and malignant rabbit fibroma virus that is important for viral replication in lymphocytes.</title>
        <authorList>
            <person name="Strayer D.S."/>
            <person name="Jerng H.H."/>
            <person name="O'Connor K."/>
        </authorList>
    </citation>
    <scope>NUCLEOTIDE SEQUENCE [GENOMIC DNA]</scope>
</reference>
<reference key="4">
    <citation type="journal article" date="1999" name="Virology">
        <title>The complete genome sequence of shope (Rabbit) fibroma virus.</title>
        <authorList>
            <person name="Willer D.O."/>
            <person name="McFadden G."/>
            <person name="Evans D.H."/>
        </authorList>
    </citation>
    <scope>NUCLEOTIDE SEQUENCE [LARGE SCALE GENOMIC DNA]</scope>
</reference>
<feature type="signal peptide" evidence="2">
    <location>
        <begin position="1"/>
        <end position="19"/>
    </location>
</feature>
<feature type="chain" id="PRO_0000007605" description="Growth factor">
    <location>
        <begin position="20"/>
        <end position="80"/>
    </location>
</feature>
<feature type="domain" description="EGF-like" evidence="3">
    <location>
        <begin position="29"/>
        <end position="73"/>
    </location>
</feature>
<feature type="glycosylation site" description="N-linked (GlcNAc...) asparagine; by host" evidence="2">
    <location>
        <position position="44"/>
    </location>
</feature>
<feature type="glycosylation site" description="N-linked (GlcNAc...) asparagine; by host" evidence="2">
    <location>
        <position position="54"/>
    </location>
</feature>
<feature type="disulfide bond" evidence="3">
    <location>
        <begin position="33"/>
        <end position="47"/>
    </location>
</feature>
<feature type="disulfide bond" evidence="3">
    <location>
        <begin position="41"/>
        <end position="61"/>
    </location>
</feature>
<feature type="disulfide bond" evidence="3">
    <location>
        <begin position="63"/>
        <end position="72"/>
    </location>
</feature>
<organismHost>
    <name type="scientific">Oryctolagus cuniculus</name>
    <name type="common">Rabbit</name>
    <dbReference type="NCBI Taxonomy" id="9986"/>
</organismHost>
<dbReference type="EMBL" id="M15921">
    <property type="protein sequence ID" value="AAA66873.1"/>
    <property type="molecule type" value="Genomic_DNA"/>
</dbReference>
<dbReference type="EMBL" id="AF170722">
    <property type="protein sequence ID" value="AAF17894.1"/>
    <property type="molecule type" value="Genomic_DNA"/>
</dbReference>
<dbReference type="PIR" id="A26723">
    <property type="entry name" value="EGVZSF"/>
</dbReference>
<dbReference type="RefSeq" id="NP_051899.1">
    <property type="nucleotide sequence ID" value="NC_001266.1"/>
</dbReference>
<dbReference type="SMR" id="P08441"/>
<dbReference type="KEGG" id="vg:1486856"/>
<dbReference type="Proteomes" id="UP000000868">
    <property type="component" value="Segment"/>
</dbReference>
<dbReference type="GO" id="GO:0005576">
    <property type="term" value="C:extracellular region"/>
    <property type="evidence" value="ECO:0007669"/>
    <property type="project" value="UniProtKB-SubCell"/>
</dbReference>
<dbReference type="GO" id="GO:0008083">
    <property type="term" value="F:growth factor activity"/>
    <property type="evidence" value="ECO:0007669"/>
    <property type="project" value="UniProtKB-KW"/>
</dbReference>
<dbReference type="Gene3D" id="2.10.25.10">
    <property type="entry name" value="Laminin"/>
    <property type="match status" value="1"/>
</dbReference>
<dbReference type="InterPro" id="IPR000742">
    <property type="entry name" value="EGF-like_dom"/>
</dbReference>
<dbReference type="Pfam" id="PF00008">
    <property type="entry name" value="EGF"/>
    <property type="match status" value="1"/>
</dbReference>
<dbReference type="PRINTS" id="PR00009">
    <property type="entry name" value="EGFTGF"/>
</dbReference>
<dbReference type="SUPFAM" id="SSF57196">
    <property type="entry name" value="EGF/Laminin"/>
    <property type="match status" value="1"/>
</dbReference>
<dbReference type="PROSITE" id="PS00022">
    <property type="entry name" value="EGF_1"/>
    <property type="match status" value="1"/>
</dbReference>
<dbReference type="PROSITE" id="PS50026">
    <property type="entry name" value="EGF_3"/>
    <property type="match status" value="1"/>
</dbReference>
<gene>
    <name type="ORF">s010L</name>
</gene>
<name>GRFA_RFVKA</name>
<proteinExistence type="inferred from homology"/>
<organism>
    <name type="scientific">Rabbit fibroma virus (strain Kasza)</name>
    <name type="common">RFV</name>
    <name type="synonym">Shope fibroma virus (strain Kasza)</name>
    <dbReference type="NCBI Taxonomy" id="10272"/>
    <lineage>
        <taxon>Viruses</taxon>
        <taxon>Varidnaviria</taxon>
        <taxon>Bamfordvirae</taxon>
        <taxon>Nucleocytoviricota</taxon>
        <taxon>Pokkesviricetes</taxon>
        <taxon>Chitovirales</taxon>
        <taxon>Poxviridae</taxon>
        <taxon>Chordopoxvirinae</taxon>
        <taxon>Leporipoxvirus</taxon>
        <taxon>Rabbit fibroma virus</taxon>
    </lineage>
</organism>
<accession>P08441</accession>
<accession>Q77PC4</accession>
<evidence type="ECO:0000250" key="1"/>
<evidence type="ECO:0000255" key="2"/>
<evidence type="ECO:0000255" key="3">
    <source>
        <dbReference type="PROSITE-ProRule" id="PRU00076"/>
    </source>
</evidence>